<keyword id="KW-0687">Ribonucleoprotein</keyword>
<keyword id="KW-0689">Ribosomal protein</keyword>
<keyword id="KW-0694">RNA-binding</keyword>
<keyword id="KW-0699">rRNA-binding</keyword>
<evidence type="ECO:0000255" key="1">
    <source>
        <dbReference type="HAMAP-Rule" id="MF_00382"/>
    </source>
</evidence>
<evidence type="ECO:0000305" key="2"/>
<feature type="chain" id="PRO_0000177110" description="Large ribosomal subunit protein bL20">
    <location>
        <begin position="1"/>
        <end position="118"/>
    </location>
</feature>
<organism>
    <name type="scientific">Azotobacter vinelandii</name>
    <dbReference type="NCBI Taxonomy" id="354"/>
    <lineage>
        <taxon>Bacteria</taxon>
        <taxon>Pseudomonadati</taxon>
        <taxon>Pseudomonadota</taxon>
        <taxon>Gammaproteobacteria</taxon>
        <taxon>Pseudomonadales</taxon>
        <taxon>Pseudomonadaceae</taxon>
        <taxon>Azotobacter</taxon>
    </lineage>
</organism>
<reference key="1">
    <citation type="submission" date="2000-12" db="EMBL/GenBank/DDBJ databases">
        <title>Control of PheST in Azotobacter vinelandii.</title>
        <authorList>
            <person name="Tindale A.E."/>
            <person name="Mehrotra M."/>
            <person name="Macyk A.S."/>
            <person name="Kujat-Choy S."/>
            <person name="Page W.J."/>
        </authorList>
    </citation>
    <scope>NUCLEOTIDE SEQUENCE [GENOMIC DNA]</scope>
    <source>
        <strain>UA22</strain>
    </source>
</reference>
<proteinExistence type="inferred from homology"/>
<dbReference type="EMBL" id="AF332624">
    <property type="protein sequence ID" value="AAL87033.1"/>
    <property type="molecule type" value="Genomic_DNA"/>
</dbReference>
<dbReference type="SMR" id="Q8RPZ9"/>
<dbReference type="GO" id="GO:1990904">
    <property type="term" value="C:ribonucleoprotein complex"/>
    <property type="evidence" value="ECO:0007669"/>
    <property type="project" value="UniProtKB-KW"/>
</dbReference>
<dbReference type="GO" id="GO:0005840">
    <property type="term" value="C:ribosome"/>
    <property type="evidence" value="ECO:0007669"/>
    <property type="project" value="UniProtKB-KW"/>
</dbReference>
<dbReference type="GO" id="GO:0019843">
    <property type="term" value="F:rRNA binding"/>
    <property type="evidence" value="ECO:0007669"/>
    <property type="project" value="UniProtKB-UniRule"/>
</dbReference>
<dbReference type="GO" id="GO:0003735">
    <property type="term" value="F:structural constituent of ribosome"/>
    <property type="evidence" value="ECO:0007669"/>
    <property type="project" value="InterPro"/>
</dbReference>
<dbReference type="GO" id="GO:0000027">
    <property type="term" value="P:ribosomal large subunit assembly"/>
    <property type="evidence" value="ECO:0007669"/>
    <property type="project" value="UniProtKB-UniRule"/>
</dbReference>
<dbReference type="GO" id="GO:0006412">
    <property type="term" value="P:translation"/>
    <property type="evidence" value="ECO:0007669"/>
    <property type="project" value="InterPro"/>
</dbReference>
<dbReference type="CDD" id="cd07026">
    <property type="entry name" value="Ribosomal_L20"/>
    <property type="match status" value="1"/>
</dbReference>
<dbReference type="FunFam" id="1.10.1900.20:FF:000001">
    <property type="entry name" value="50S ribosomal protein L20"/>
    <property type="match status" value="1"/>
</dbReference>
<dbReference type="Gene3D" id="6.10.160.10">
    <property type="match status" value="1"/>
</dbReference>
<dbReference type="Gene3D" id="1.10.1900.20">
    <property type="entry name" value="Ribosomal protein L20"/>
    <property type="match status" value="1"/>
</dbReference>
<dbReference type="HAMAP" id="MF_00382">
    <property type="entry name" value="Ribosomal_bL20"/>
    <property type="match status" value="1"/>
</dbReference>
<dbReference type="InterPro" id="IPR005813">
    <property type="entry name" value="Ribosomal_bL20"/>
</dbReference>
<dbReference type="InterPro" id="IPR049946">
    <property type="entry name" value="RIBOSOMAL_L20_CS"/>
</dbReference>
<dbReference type="InterPro" id="IPR035566">
    <property type="entry name" value="Ribosomal_protein_bL20_C"/>
</dbReference>
<dbReference type="NCBIfam" id="TIGR01032">
    <property type="entry name" value="rplT_bact"/>
    <property type="match status" value="1"/>
</dbReference>
<dbReference type="PANTHER" id="PTHR10986">
    <property type="entry name" value="39S RIBOSOMAL PROTEIN L20"/>
    <property type="match status" value="1"/>
</dbReference>
<dbReference type="Pfam" id="PF00453">
    <property type="entry name" value="Ribosomal_L20"/>
    <property type="match status" value="1"/>
</dbReference>
<dbReference type="PRINTS" id="PR00062">
    <property type="entry name" value="RIBOSOMALL20"/>
</dbReference>
<dbReference type="SUPFAM" id="SSF74731">
    <property type="entry name" value="Ribosomal protein L20"/>
    <property type="match status" value="1"/>
</dbReference>
<dbReference type="PROSITE" id="PS00937">
    <property type="entry name" value="RIBOSOMAL_L20"/>
    <property type="match status" value="1"/>
</dbReference>
<comment type="function">
    <text evidence="1">Binds directly to 23S ribosomal RNA and is necessary for the in vitro assembly process of the 50S ribosomal subunit. It is not involved in the protein synthesizing functions of that subunit.</text>
</comment>
<comment type="similarity">
    <text evidence="1">Belongs to the bacterial ribosomal protein bL20 family.</text>
</comment>
<protein>
    <recommendedName>
        <fullName evidence="1">Large ribosomal subunit protein bL20</fullName>
    </recommendedName>
    <alternativeName>
        <fullName evidence="2">50S ribosomal protein L20</fullName>
    </alternativeName>
</protein>
<name>RL20_AZOVI</name>
<sequence length="118" mass="13437">MARVKRGVIARRRHKKILKLAKGYYGARSRVFRVAKQAVIKAGQYAYRDRRQRKRQFRALWIARINAGDRQNGLSYSRLIAGLKKATIEIDRKVLSDLAVNEKAAFAAIVEKAKAVLA</sequence>
<accession>Q8RPZ9</accession>
<gene>
    <name evidence="1" type="primary">rplT</name>
</gene>